<reference key="1">
    <citation type="journal article" date="2009" name="PLoS Biol.">
        <title>Lineage-specific biology revealed by a finished genome assembly of the mouse.</title>
        <authorList>
            <person name="Church D.M."/>
            <person name="Goodstadt L."/>
            <person name="Hillier L.W."/>
            <person name="Zody M.C."/>
            <person name="Goldstein S."/>
            <person name="She X."/>
            <person name="Bult C.J."/>
            <person name="Agarwala R."/>
            <person name="Cherry J.L."/>
            <person name="DiCuccio M."/>
            <person name="Hlavina W."/>
            <person name="Kapustin Y."/>
            <person name="Meric P."/>
            <person name="Maglott D."/>
            <person name="Birtle Z."/>
            <person name="Marques A.C."/>
            <person name="Graves T."/>
            <person name="Zhou S."/>
            <person name="Teague B."/>
            <person name="Potamousis K."/>
            <person name="Churas C."/>
            <person name="Place M."/>
            <person name="Herschleb J."/>
            <person name="Runnheim R."/>
            <person name="Forrest D."/>
            <person name="Amos-Landgraf J."/>
            <person name="Schwartz D.C."/>
            <person name="Cheng Z."/>
            <person name="Lindblad-Toh K."/>
            <person name="Eichler E.E."/>
            <person name="Ponting C.P."/>
        </authorList>
    </citation>
    <scope>NUCLEOTIDE SEQUENCE [LARGE SCALE GENOMIC DNA]</scope>
    <source>
        <strain>C57BL/6J</strain>
    </source>
</reference>
<reference key="2">
    <citation type="journal article" date="2004" name="Genome Res.">
        <title>The status, quality, and expansion of the NIH full-length cDNA project: the Mammalian Gene Collection (MGC).</title>
        <authorList>
            <consortium name="The MGC Project Team"/>
        </authorList>
    </citation>
    <scope>NUCLEOTIDE SEQUENCE [LARGE SCALE MRNA]</scope>
</reference>
<reference key="3">
    <citation type="journal article" date="2019" name="Cell Prolif.">
        <title>Osteoclastogenesis inhibition by mutated IGSF23 results in human osteopetrosis.</title>
        <authorList>
            <person name="Yuan Y."/>
            <person name="Yang L."/>
            <person name="Liu T."/>
            <person name="Zhang H."/>
            <person name="Lu Q."/>
        </authorList>
    </citation>
    <scope>FUNCTION</scope>
</reference>
<sequence length="239" mass="25410">MNCLRDSGRGLIPAWETLLLTGALLSSCTCSATSKLPQMKGANTQLPVPGALEKDLSTSWFPELEAQPPTSSSPKGLPGRPRTSQEVPNAEDNPSLIPLVTFPESSKGIIYSDLNYSVILQWMVTMNPEPVLSWTFDGKPCGTGEKLFIRRLSPDQLGTYLCIARNTDKELVSEPVTVSLSPATGAPTVPAPTVAYPMKPNDYMSVSGGSAIALIVAATIGGLVLIGSVCFYILLALKK</sequence>
<accession>B2RTN2</accession>
<comment type="function">
    <text evidence="5">May be involved in osteoclast differentiation.</text>
</comment>
<comment type="subcellular location">
    <subcellularLocation>
        <location evidence="1">Cell membrane</location>
        <topology evidence="2">Single-pass membrane protein</topology>
    </subcellularLocation>
</comment>
<organism>
    <name type="scientific">Mus musculus</name>
    <name type="common">Mouse</name>
    <dbReference type="NCBI Taxonomy" id="10090"/>
    <lineage>
        <taxon>Eukaryota</taxon>
        <taxon>Metazoa</taxon>
        <taxon>Chordata</taxon>
        <taxon>Craniata</taxon>
        <taxon>Vertebrata</taxon>
        <taxon>Euteleostomi</taxon>
        <taxon>Mammalia</taxon>
        <taxon>Eutheria</taxon>
        <taxon>Euarchontoglires</taxon>
        <taxon>Glires</taxon>
        <taxon>Rodentia</taxon>
        <taxon>Myomorpha</taxon>
        <taxon>Muroidea</taxon>
        <taxon>Muridae</taxon>
        <taxon>Murinae</taxon>
        <taxon>Mus</taxon>
        <taxon>Mus</taxon>
    </lineage>
</organism>
<proteinExistence type="evidence at transcript level"/>
<feature type="chain" id="PRO_0000457624" description="Immunoglobulin superfamily member 23">
    <location>
        <begin position="1"/>
        <end position="239"/>
    </location>
</feature>
<feature type="transmembrane region" description="Helical" evidence="2">
    <location>
        <begin position="214"/>
        <end position="234"/>
    </location>
</feature>
<feature type="domain" description="Ig-like" evidence="3">
    <location>
        <begin position="94"/>
        <end position="179"/>
    </location>
</feature>
<feature type="region of interest" description="Disordered" evidence="4">
    <location>
        <begin position="63"/>
        <end position="93"/>
    </location>
</feature>
<evidence type="ECO:0000250" key="1">
    <source>
        <dbReference type="UniProtKB" id="A1L1A6"/>
    </source>
</evidence>
<evidence type="ECO:0000255" key="2"/>
<evidence type="ECO:0000255" key="3">
    <source>
        <dbReference type="PROSITE-ProRule" id="PRU00114"/>
    </source>
</evidence>
<evidence type="ECO:0000256" key="4">
    <source>
        <dbReference type="SAM" id="MobiDB-lite"/>
    </source>
</evidence>
<evidence type="ECO:0000269" key="5">
    <source>
    </source>
</evidence>
<evidence type="ECO:0000305" key="6"/>
<evidence type="ECO:0000312" key="7">
    <source>
        <dbReference type="MGI" id="MGI:1917330"/>
    </source>
</evidence>
<keyword id="KW-1003">Cell membrane</keyword>
<keyword id="KW-0393">Immunoglobulin domain</keyword>
<keyword id="KW-0472">Membrane</keyword>
<keyword id="KW-1185">Reference proteome</keyword>
<keyword id="KW-0812">Transmembrane</keyword>
<keyword id="KW-1133">Transmembrane helix</keyword>
<gene>
    <name evidence="7" type="primary">Igsf23</name>
</gene>
<protein>
    <recommendedName>
        <fullName evidence="6">Immunoglobulin superfamily member 23</fullName>
    </recommendedName>
</protein>
<dbReference type="EMBL" id="AC130530">
    <property type="status" value="NOT_ANNOTATED_CDS"/>
    <property type="molecule type" value="Genomic_DNA"/>
</dbReference>
<dbReference type="EMBL" id="AC149085">
    <property type="status" value="NOT_ANNOTATED_CDS"/>
    <property type="molecule type" value="Genomic_DNA"/>
</dbReference>
<dbReference type="EMBL" id="BC139455">
    <property type="protein sequence ID" value="AAI39456.1"/>
    <property type="molecule type" value="mRNA"/>
</dbReference>
<dbReference type="EMBL" id="BC139458">
    <property type="protein sequence ID" value="AAI39459.1"/>
    <property type="molecule type" value="mRNA"/>
</dbReference>
<dbReference type="CCDS" id="CCDS52065.1"/>
<dbReference type="RefSeq" id="NP_081584.1">
    <property type="nucleotide sequence ID" value="NM_027308.2"/>
</dbReference>
<dbReference type="STRING" id="10090.ENSMUSP00000047914"/>
<dbReference type="GlyGen" id="B2RTN2">
    <property type="glycosylation" value="1 site"/>
</dbReference>
<dbReference type="PaxDb" id="10090-ENSMUSP00000047914"/>
<dbReference type="ProteomicsDB" id="339061"/>
<dbReference type="Antibodypedia" id="70970">
    <property type="antibodies" value="8 antibodies from 4 providers"/>
</dbReference>
<dbReference type="Ensembl" id="ENSMUST00000043440.8">
    <property type="protein sequence ID" value="ENSMUSP00000047914.7"/>
    <property type="gene ID" value="ENSMUSG00000040498.8"/>
</dbReference>
<dbReference type="GeneID" id="70080"/>
<dbReference type="KEGG" id="mmu:70080"/>
<dbReference type="UCSC" id="uc009fnq.1">
    <property type="organism name" value="mouse"/>
</dbReference>
<dbReference type="AGR" id="MGI:1917330"/>
<dbReference type="CTD" id="147710"/>
<dbReference type="MGI" id="MGI:1917330">
    <property type="gene designation" value="Igsf23"/>
</dbReference>
<dbReference type="VEuPathDB" id="HostDB:ENSMUSG00000040498"/>
<dbReference type="eggNOG" id="ENOG502RU2R">
    <property type="taxonomic scope" value="Eukaryota"/>
</dbReference>
<dbReference type="GeneTree" id="ENSGT00390000015308"/>
<dbReference type="HOGENOM" id="CLU_102978_0_0_1"/>
<dbReference type="InParanoid" id="B2RTN2"/>
<dbReference type="OMA" id="GHSPAWK"/>
<dbReference type="OrthoDB" id="10012075at2759"/>
<dbReference type="TreeFam" id="TF339455"/>
<dbReference type="BioGRID-ORCS" id="70080">
    <property type="hits" value="7 hits in 76 CRISPR screens"/>
</dbReference>
<dbReference type="PRO" id="PR:B2RTN2"/>
<dbReference type="Proteomes" id="UP000000589">
    <property type="component" value="Chromosome 7"/>
</dbReference>
<dbReference type="RNAct" id="B2RTN2">
    <property type="molecule type" value="protein"/>
</dbReference>
<dbReference type="Bgee" id="ENSMUSG00000040498">
    <property type="expression patterns" value="Expressed in small intestine Peyer's patch and 61 other cell types or tissues"/>
</dbReference>
<dbReference type="ExpressionAtlas" id="B2RTN2">
    <property type="expression patterns" value="baseline and differential"/>
</dbReference>
<dbReference type="GO" id="GO:0005886">
    <property type="term" value="C:plasma membrane"/>
    <property type="evidence" value="ECO:0007669"/>
    <property type="project" value="UniProtKB-SubCell"/>
</dbReference>
<dbReference type="Gene3D" id="2.60.40.10">
    <property type="entry name" value="Immunoglobulins"/>
    <property type="match status" value="1"/>
</dbReference>
<dbReference type="InterPro" id="IPR007110">
    <property type="entry name" value="Ig-like_dom"/>
</dbReference>
<dbReference type="InterPro" id="IPR036179">
    <property type="entry name" value="Ig-like_dom_sf"/>
</dbReference>
<dbReference type="InterPro" id="IPR013783">
    <property type="entry name" value="Ig-like_fold"/>
</dbReference>
<dbReference type="SUPFAM" id="SSF48726">
    <property type="entry name" value="Immunoglobulin"/>
    <property type="match status" value="1"/>
</dbReference>
<dbReference type="PROSITE" id="PS50835">
    <property type="entry name" value="IG_LIKE"/>
    <property type="match status" value="1"/>
</dbReference>
<name>IGS23_MOUSE</name>